<name>PYRH_NEIMB</name>
<evidence type="ECO:0000250" key="1"/>
<evidence type="ECO:0000269" key="2">
    <source>
    </source>
</evidence>
<evidence type="ECO:0000305" key="3"/>
<evidence type="ECO:0007829" key="4">
    <source>
        <dbReference type="PDB" id="1YBD"/>
    </source>
</evidence>
<keyword id="KW-0002">3D-structure</keyword>
<keyword id="KW-0021">Allosteric enzyme</keyword>
<keyword id="KW-0067">ATP-binding</keyword>
<keyword id="KW-0963">Cytoplasm</keyword>
<keyword id="KW-0418">Kinase</keyword>
<keyword id="KW-0547">Nucleotide-binding</keyword>
<keyword id="KW-0665">Pyrimidine biosynthesis</keyword>
<keyword id="KW-1185">Reference proteome</keyword>
<keyword id="KW-0808">Transferase</keyword>
<accession>P65932</accession>
<accession>Q9JQT5</accession>
<feature type="chain" id="PRO_0000143866" description="Uridylate kinase">
    <location>
        <begin position="1"/>
        <end position="239"/>
    </location>
</feature>
<feature type="binding site" evidence="1">
    <location>
        <begin position="13"/>
        <end position="16"/>
    </location>
    <ligand>
        <name>ATP</name>
        <dbReference type="ChEBI" id="CHEBI:30616"/>
    </ligand>
</feature>
<feature type="binding site" evidence="1">
    <location>
        <position position="55"/>
    </location>
    <ligand>
        <name>UMP</name>
        <dbReference type="ChEBI" id="CHEBI:57865"/>
    </ligand>
</feature>
<feature type="binding site" evidence="1">
    <location>
        <position position="56"/>
    </location>
    <ligand>
        <name>ATP</name>
        <dbReference type="ChEBI" id="CHEBI:30616"/>
    </ligand>
</feature>
<feature type="binding site" evidence="1">
    <location>
        <position position="60"/>
    </location>
    <ligand>
        <name>ATP</name>
        <dbReference type="ChEBI" id="CHEBI:30616"/>
    </ligand>
</feature>
<feature type="binding site" evidence="1">
    <location>
        <position position="75"/>
    </location>
    <ligand>
        <name>UMP</name>
        <dbReference type="ChEBI" id="CHEBI:57865"/>
    </ligand>
</feature>
<feature type="binding site" evidence="1">
    <location>
        <begin position="136"/>
        <end position="143"/>
    </location>
    <ligand>
        <name>UMP</name>
        <dbReference type="ChEBI" id="CHEBI:57865"/>
    </ligand>
</feature>
<feature type="binding site" evidence="1">
    <location>
        <position position="163"/>
    </location>
    <ligand>
        <name>ATP</name>
        <dbReference type="ChEBI" id="CHEBI:30616"/>
    </ligand>
</feature>
<feature type="binding site" evidence="1">
    <location>
        <position position="164"/>
    </location>
    <ligand>
        <name>ATP</name>
        <dbReference type="ChEBI" id="CHEBI:30616"/>
    </ligand>
</feature>
<feature type="binding site" evidence="1">
    <location>
        <position position="169"/>
    </location>
    <ligand>
        <name>ATP</name>
        <dbReference type="ChEBI" id="CHEBI:30616"/>
    </ligand>
</feature>
<feature type="binding site" evidence="1">
    <location>
        <position position="172"/>
    </location>
    <ligand>
        <name>ATP</name>
        <dbReference type="ChEBI" id="CHEBI:30616"/>
    </ligand>
</feature>
<feature type="strand" evidence="4">
    <location>
        <begin position="8"/>
        <end position="14"/>
    </location>
</feature>
<feature type="helix" evidence="4">
    <location>
        <begin position="16"/>
        <end position="20"/>
    </location>
</feature>
<feature type="strand" evidence="4">
    <location>
        <begin position="23"/>
        <end position="26"/>
    </location>
</feature>
<feature type="helix" evidence="4">
    <location>
        <begin position="29"/>
        <end position="44"/>
    </location>
</feature>
<feature type="strand" evidence="4">
    <location>
        <begin position="48"/>
        <end position="53"/>
    </location>
</feature>
<feature type="helix" evidence="4">
    <location>
        <begin position="56"/>
        <end position="66"/>
    </location>
</feature>
<feature type="helix" evidence="4">
    <location>
        <begin position="71"/>
        <end position="95"/>
    </location>
</feature>
<feature type="strand" evidence="4">
    <location>
        <begin position="100"/>
        <end position="106"/>
    </location>
</feature>
<feature type="strand" evidence="4">
    <location>
        <begin position="108"/>
        <end position="111"/>
    </location>
</feature>
<feature type="helix" evidence="4">
    <location>
        <begin position="117"/>
        <end position="125"/>
    </location>
</feature>
<feature type="strand" evidence="4">
    <location>
        <begin position="129"/>
        <end position="134"/>
    </location>
</feature>
<feature type="helix" evidence="4">
    <location>
        <begin position="143"/>
        <end position="153"/>
    </location>
</feature>
<feature type="strand" evidence="4">
    <location>
        <begin position="157"/>
        <end position="162"/>
    </location>
</feature>
<feature type="strand" evidence="4">
    <location>
        <begin position="164"/>
        <end position="167"/>
    </location>
</feature>
<feature type="strand" evidence="4">
    <location>
        <begin position="169"/>
        <end position="171"/>
    </location>
</feature>
<feature type="helix" evidence="4">
    <location>
        <begin position="173"/>
        <end position="175"/>
    </location>
</feature>
<feature type="strand" evidence="4">
    <location>
        <begin position="183"/>
        <end position="186"/>
    </location>
</feature>
<feature type="helix" evidence="4">
    <location>
        <begin position="187"/>
        <end position="192"/>
    </location>
</feature>
<feature type="helix" evidence="4">
    <location>
        <begin position="200"/>
        <end position="208"/>
    </location>
</feature>
<feature type="strand" evidence="4">
    <location>
        <begin position="213"/>
        <end position="216"/>
    </location>
</feature>
<feature type="helix" evidence="4">
    <location>
        <begin position="223"/>
        <end position="229"/>
    </location>
</feature>
<feature type="strand" evidence="4">
    <location>
        <begin position="234"/>
        <end position="238"/>
    </location>
</feature>
<reference key="1">
    <citation type="journal article" date="2000" name="Science">
        <title>Complete genome sequence of Neisseria meningitidis serogroup B strain MC58.</title>
        <authorList>
            <person name="Tettelin H."/>
            <person name="Saunders N.J."/>
            <person name="Heidelberg J.F."/>
            <person name="Jeffries A.C."/>
            <person name="Nelson K.E."/>
            <person name="Eisen J.A."/>
            <person name="Ketchum K.A."/>
            <person name="Hood D.W."/>
            <person name="Peden J.F."/>
            <person name="Dodson R.J."/>
            <person name="Nelson W.C."/>
            <person name="Gwinn M.L."/>
            <person name="DeBoy R.T."/>
            <person name="Peterson J.D."/>
            <person name="Hickey E.K."/>
            <person name="Haft D.H."/>
            <person name="Salzberg S.L."/>
            <person name="White O."/>
            <person name="Fleischmann R.D."/>
            <person name="Dougherty B.A."/>
            <person name="Mason T.M."/>
            <person name="Ciecko A."/>
            <person name="Parksey D.S."/>
            <person name="Blair E."/>
            <person name="Cittone H."/>
            <person name="Clark E.B."/>
            <person name="Cotton M.D."/>
            <person name="Utterback T.R."/>
            <person name="Khouri H.M."/>
            <person name="Qin H."/>
            <person name="Vamathevan J.J."/>
            <person name="Gill J."/>
            <person name="Scarlato V."/>
            <person name="Masignani V."/>
            <person name="Pizza M."/>
            <person name="Grandi G."/>
            <person name="Sun L."/>
            <person name="Smith H.O."/>
            <person name="Fraser C.M."/>
            <person name="Moxon E.R."/>
            <person name="Rappuoli R."/>
            <person name="Venter J.C."/>
        </authorList>
    </citation>
    <scope>NUCLEOTIDE SEQUENCE [LARGE SCALE GENOMIC DNA]</scope>
    <source>
        <strain>ATCC BAA-335 / MC58</strain>
    </source>
</reference>
<reference key="2">
    <citation type="journal article" date="2007" name="J. Biol. Chem.">
        <title>Regulatory mechanisms differ in UMP kinases from Gram-negative and Gram-positive bacteria.</title>
        <authorList>
            <person name="Evrin C."/>
            <person name="Straut M."/>
            <person name="Slavova-Azmanova N."/>
            <person name="Bucurenci N."/>
            <person name="Onu A."/>
            <person name="Assairi L."/>
            <person name="Ionescu M."/>
            <person name="Palibroda N."/>
            <person name="Barzu O."/>
            <person name="Gilles A.-M."/>
        </authorList>
    </citation>
    <scope>FUNCTION</scope>
    <scope>ACTIVITY REGULATION</scope>
    <scope>KINETIC PARAMETERS</scope>
    <scope>IDENTIFICATION BY MASS SPECTROMETRY</scope>
    <scope>SUBUNIT</scope>
</reference>
<reference key="3">
    <citation type="submission" date="2005-02" db="PDB data bank">
        <title>Crystal structure analysis of uridylate kinase from Neisseria meningitidis.</title>
        <authorList>
            <consortium name="New York structural genomics research consortium (NYSGRC)"/>
        </authorList>
    </citation>
    <scope>X-RAY CRYSTALLOGRAPHY (2.6 ANGSTROMS)</scope>
</reference>
<protein>
    <recommendedName>
        <fullName>Uridylate kinase</fullName>
        <shortName>UK</shortName>
        <ecNumber>2.7.4.22</ecNumber>
    </recommendedName>
    <alternativeName>
        <fullName>Uridine monophosphate kinase</fullName>
        <shortName>UMP kinase</shortName>
        <shortName>UMPK</shortName>
    </alternativeName>
</protein>
<gene>
    <name type="primary">pyrH</name>
    <name type="ordered locus">NMB2103</name>
</gene>
<sequence>MTQQIKYKRVLLKLSGESLMGSDPFGINHDTIVQTVGEIAEVVKMGVQVGIVVGGGNIFRGVSAQAGSMDRATADYMGMMATVMNALALKDAFETLGIKARVQSALSMQQIAETYARPKAIQYLEEGKVVIFAAGTGNPFFTTDTAAALRGAEMNCDVMLKATNVDGVYTADPKKDPSATRYETITFDEALLKNLKVMDATAFALCRERKLNIVVFGIAKEGSLKRVITGEDEGTLVHC</sequence>
<dbReference type="EC" id="2.7.4.22"/>
<dbReference type="EMBL" id="AE002098">
    <property type="protein sequence ID" value="AAF42420.1"/>
    <property type="molecule type" value="Genomic_DNA"/>
</dbReference>
<dbReference type="PIR" id="H81006">
    <property type="entry name" value="H81006"/>
</dbReference>
<dbReference type="RefSeq" id="NP_275091.1">
    <property type="nucleotide sequence ID" value="NC_003112.2"/>
</dbReference>
<dbReference type="RefSeq" id="WP_002215090.1">
    <property type="nucleotide sequence ID" value="NC_003112.2"/>
</dbReference>
<dbReference type="PDB" id="1YBD">
    <property type="method" value="X-ray"/>
    <property type="resolution" value="2.60 A"/>
    <property type="chains" value="A/B/C=1-239"/>
</dbReference>
<dbReference type="PDBsum" id="1YBD"/>
<dbReference type="SMR" id="P65932"/>
<dbReference type="FunCoup" id="P65932">
    <property type="interactions" value="568"/>
</dbReference>
<dbReference type="STRING" id="122586.NMB2103"/>
<dbReference type="PaxDb" id="122586-NMB2103"/>
<dbReference type="DNASU" id="903933"/>
<dbReference type="KEGG" id="nme:NMB2103"/>
<dbReference type="PATRIC" id="fig|122586.8.peg.2685"/>
<dbReference type="HOGENOM" id="CLU_033861_0_0_4"/>
<dbReference type="InParanoid" id="P65932"/>
<dbReference type="OrthoDB" id="9807458at2"/>
<dbReference type="BRENDA" id="2.7.4.22">
    <property type="organism ID" value="3593"/>
</dbReference>
<dbReference type="SABIO-RK" id="P65932"/>
<dbReference type="UniPathway" id="UPA00159">
    <property type="reaction ID" value="UER00275"/>
</dbReference>
<dbReference type="EvolutionaryTrace" id="P65932"/>
<dbReference type="Proteomes" id="UP000000425">
    <property type="component" value="Chromosome"/>
</dbReference>
<dbReference type="GO" id="GO:0005829">
    <property type="term" value="C:cytosol"/>
    <property type="evidence" value="ECO:0000318"/>
    <property type="project" value="GO_Central"/>
</dbReference>
<dbReference type="GO" id="GO:0005524">
    <property type="term" value="F:ATP binding"/>
    <property type="evidence" value="ECO:0007669"/>
    <property type="project" value="UniProtKB-KW"/>
</dbReference>
<dbReference type="GO" id="GO:0033862">
    <property type="term" value="F:UMP kinase activity"/>
    <property type="evidence" value="ECO:0000318"/>
    <property type="project" value="GO_Central"/>
</dbReference>
<dbReference type="GO" id="GO:0044210">
    <property type="term" value="P:'de novo' CTP biosynthetic process"/>
    <property type="evidence" value="ECO:0007669"/>
    <property type="project" value="UniProtKB-UniRule"/>
</dbReference>
<dbReference type="GO" id="GO:0006225">
    <property type="term" value="P:UDP biosynthetic process"/>
    <property type="evidence" value="ECO:0000318"/>
    <property type="project" value="GO_Central"/>
</dbReference>
<dbReference type="CDD" id="cd04254">
    <property type="entry name" value="AAK_UMPK-PyrH-Ec"/>
    <property type="match status" value="1"/>
</dbReference>
<dbReference type="FunFam" id="3.40.1160.10:FF:000001">
    <property type="entry name" value="Uridylate kinase"/>
    <property type="match status" value="1"/>
</dbReference>
<dbReference type="Gene3D" id="3.40.1160.10">
    <property type="entry name" value="Acetylglutamate kinase-like"/>
    <property type="match status" value="1"/>
</dbReference>
<dbReference type="HAMAP" id="MF_01220_B">
    <property type="entry name" value="PyrH_B"/>
    <property type="match status" value="1"/>
</dbReference>
<dbReference type="InterPro" id="IPR036393">
    <property type="entry name" value="AceGlu_kinase-like_sf"/>
</dbReference>
<dbReference type="InterPro" id="IPR001048">
    <property type="entry name" value="Asp/Glu/Uridylate_kinase"/>
</dbReference>
<dbReference type="InterPro" id="IPR011817">
    <property type="entry name" value="Uridylate_kinase"/>
</dbReference>
<dbReference type="InterPro" id="IPR015963">
    <property type="entry name" value="Uridylate_kinase_bac"/>
</dbReference>
<dbReference type="NCBIfam" id="TIGR02075">
    <property type="entry name" value="pyrH_bact"/>
    <property type="match status" value="1"/>
</dbReference>
<dbReference type="PANTHER" id="PTHR42833">
    <property type="entry name" value="URIDYLATE KINASE"/>
    <property type="match status" value="1"/>
</dbReference>
<dbReference type="PANTHER" id="PTHR42833:SF4">
    <property type="entry name" value="URIDYLATE KINASE PUMPKIN, CHLOROPLASTIC"/>
    <property type="match status" value="1"/>
</dbReference>
<dbReference type="Pfam" id="PF00696">
    <property type="entry name" value="AA_kinase"/>
    <property type="match status" value="1"/>
</dbReference>
<dbReference type="PIRSF" id="PIRSF005650">
    <property type="entry name" value="Uridylate_kin"/>
    <property type="match status" value="1"/>
</dbReference>
<dbReference type="SUPFAM" id="SSF53633">
    <property type="entry name" value="Carbamate kinase-like"/>
    <property type="match status" value="1"/>
</dbReference>
<comment type="function">
    <text evidence="2">Catalyzes the reversible phosphorylation of UMP to UDP.</text>
</comment>
<comment type="catalytic activity">
    <reaction>
        <text>UMP + ATP = UDP + ADP</text>
        <dbReference type="Rhea" id="RHEA:24400"/>
        <dbReference type="ChEBI" id="CHEBI:30616"/>
        <dbReference type="ChEBI" id="CHEBI:57865"/>
        <dbReference type="ChEBI" id="CHEBI:58223"/>
        <dbReference type="ChEBI" id="CHEBI:456216"/>
        <dbReference type="EC" id="2.7.4.22"/>
    </reaction>
</comment>
<comment type="activity regulation">
    <text evidence="2">Allosterically activated by GTP. Inhibited by UTP.</text>
</comment>
<comment type="biophysicochemical properties">
    <kinetics>
        <KM evidence="2">2.98 mM for ATP (in the absence of GTP)</KM>
        <KM evidence="2">0.83 mM for ATP (in the presence of GTP)</KM>
        <KM evidence="2">8.7 uM for UMP</KM>
        <Vmax evidence="2">35.0 umol/min/mg enzyme (in the absence of GTP)</Vmax>
        <Vmax evidence="2">66.0 umol/min/mg enzyme (in the presence of GTP)</Vmax>
    </kinetics>
</comment>
<comment type="pathway">
    <text>Pyrimidine metabolism; CTP biosynthesis via de novo pathway; UDP from UMP (UMPK route): step 1/1.</text>
</comment>
<comment type="subunit">
    <text evidence="2">Homohexamer.</text>
</comment>
<comment type="subcellular location">
    <subcellularLocation>
        <location evidence="1">Cytoplasm</location>
    </subcellularLocation>
</comment>
<comment type="similarity">
    <text evidence="3">Belongs to the UMP kinase family.</text>
</comment>
<organism>
    <name type="scientific">Neisseria meningitidis serogroup B (strain ATCC BAA-335 / MC58)</name>
    <dbReference type="NCBI Taxonomy" id="122586"/>
    <lineage>
        <taxon>Bacteria</taxon>
        <taxon>Pseudomonadati</taxon>
        <taxon>Pseudomonadota</taxon>
        <taxon>Betaproteobacteria</taxon>
        <taxon>Neisseriales</taxon>
        <taxon>Neisseriaceae</taxon>
        <taxon>Neisseria</taxon>
    </lineage>
</organism>
<proteinExistence type="evidence at protein level"/>